<dbReference type="EC" id="3.4.11.4" evidence="1"/>
<dbReference type="EMBL" id="CP000056">
    <property type="protein sequence ID" value="AAX71707.1"/>
    <property type="status" value="ALT_INIT"/>
    <property type="molecule type" value="Genomic_DNA"/>
</dbReference>
<dbReference type="RefSeq" id="WP_021340972.1">
    <property type="nucleotide sequence ID" value="NC_007296.2"/>
</dbReference>
<dbReference type="SMR" id="Q48U99"/>
<dbReference type="MEROPS" id="M20.003"/>
<dbReference type="KEGG" id="spb:M28_Spy0593"/>
<dbReference type="HOGENOM" id="CLU_053676_0_0_9"/>
<dbReference type="GO" id="GO:0005829">
    <property type="term" value="C:cytosol"/>
    <property type="evidence" value="ECO:0007669"/>
    <property type="project" value="TreeGrafter"/>
</dbReference>
<dbReference type="GO" id="GO:0008237">
    <property type="term" value="F:metallopeptidase activity"/>
    <property type="evidence" value="ECO:0007669"/>
    <property type="project" value="UniProtKB-KW"/>
</dbReference>
<dbReference type="GO" id="GO:0045148">
    <property type="term" value="F:tripeptide aminopeptidase activity"/>
    <property type="evidence" value="ECO:0007669"/>
    <property type="project" value="UniProtKB-UniRule"/>
</dbReference>
<dbReference type="GO" id="GO:0008270">
    <property type="term" value="F:zinc ion binding"/>
    <property type="evidence" value="ECO:0007669"/>
    <property type="project" value="UniProtKB-UniRule"/>
</dbReference>
<dbReference type="GO" id="GO:0043171">
    <property type="term" value="P:peptide catabolic process"/>
    <property type="evidence" value="ECO:0007669"/>
    <property type="project" value="UniProtKB-UniRule"/>
</dbReference>
<dbReference type="GO" id="GO:0006508">
    <property type="term" value="P:proteolysis"/>
    <property type="evidence" value="ECO:0007669"/>
    <property type="project" value="UniProtKB-UniRule"/>
</dbReference>
<dbReference type="CDD" id="cd03892">
    <property type="entry name" value="M20_peptT"/>
    <property type="match status" value="1"/>
</dbReference>
<dbReference type="FunFam" id="3.30.70.360:FF:000002">
    <property type="entry name" value="Peptidase T"/>
    <property type="match status" value="1"/>
</dbReference>
<dbReference type="Gene3D" id="3.30.70.360">
    <property type="match status" value="1"/>
</dbReference>
<dbReference type="Gene3D" id="3.40.630.10">
    <property type="entry name" value="Zn peptidases"/>
    <property type="match status" value="1"/>
</dbReference>
<dbReference type="HAMAP" id="MF_00550">
    <property type="entry name" value="Aminopeptidase_M20"/>
    <property type="match status" value="1"/>
</dbReference>
<dbReference type="InterPro" id="IPR001261">
    <property type="entry name" value="ArgE/DapE_CS"/>
</dbReference>
<dbReference type="InterPro" id="IPR036264">
    <property type="entry name" value="Bact_exopeptidase_dim_dom"/>
</dbReference>
<dbReference type="InterPro" id="IPR002933">
    <property type="entry name" value="Peptidase_M20"/>
</dbReference>
<dbReference type="InterPro" id="IPR011650">
    <property type="entry name" value="Peptidase_M20_dimer"/>
</dbReference>
<dbReference type="InterPro" id="IPR010161">
    <property type="entry name" value="Peptidase_M20B"/>
</dbReference>
<dbReference type="NCBIfam" id="TIGR01882">
    <property type="entry name" value="peptidase-T"/>
    <property type="match status" value="1"/>
</dbReference>
<dbReference type="NCBIfam" id="NF003976">
    <property type="entry name" value="PRK05469.1"/>
    <property type="match status" value="1"/>
</dbReference>
<dbReference type="NCBIfam" id="NF009920">
    <property type="entry name" value="PRK13381.1"/>
    <property type="match status" value="1"/>
</dbReference>
<dbReference type="PANTHER" id="PTHR42994">
    <property type="entry name" value="PEPTIDASE T"/>
    <property type="match status" value="1"/>
</dbReference>
<dbReference type="PANTHER" id="PTHR42994:SF1">
    <property type="entry name" value="PEPTIDASE T"/>
    <property type="match status" value="1"/>
</dbReference>
<dbReference type="Pfam" id="PF07687">
    <property type="entry name" value="M20_dimer"/>
    <property type="match status" value="1"/>
</dbReference>
<dbReference type="Pfam" id="PF01546">
    <property type="entry name" value="Peptidase_M20"/>
    <property type="match status" value="1"/>
</dbReference>
<dbReference type="PIRSF" id="PIRSF037215">
    <property type="entry name" value="Peptidase_M20B"/>
    <property type="match status" value="1"/>
</dbReference>
<dbReference type="SUPFAM" id="SSF55031">
    <property type="entry name" value="Bacterial exopeptidase dimerisation domain"/>
    <property type="match status" value="1"/>
</dbReference>
<dbReference type="SUPFAM" id="SSF53187">
    <property type="entry name" value="Zn-dependent exopeptidases"/>
    <property type="match status" value="1"/>
</dbReference>
<dbReference type="PROSITE" id="PS00758">
    <property type="entry name" value="ARGE_DAPE_CPG2_1"/>
    <property type="match status" value="1"/>
</dbReference>
<dbReference type="PROSITE" id="PS00759">
    <property type="entry name" value="ARGE_DAPE_CPG2_2"/>
    <property type="match status" value="1"/>
</dbReference>
<reference key="1">
    <citation type="journal article" date="2005" name="J. Infect. Dis.">
        <title>Genome sequence of a serotype M28 strain of group A Streptococcus: potential new insights into puerperal sepsis and bacterial disease specificity.</title>
        <authorList>
            <person name="Green N.M."/>
            <person name="Zhang S."/>
            <person name="Porcella S.F."/>
            <person name="Nagiec M.J."/>
            <person name="Barbian K.D."/>
            <person name="Beres S.B."/>
            <person name="Lefebvre R.B."/>
            <person name="Musser J.M."/>
        </authorList>
    </citation>
    <scope>NUCLEOTIDE SEQUENCE [LARGE SCALE GENOMIC DNA]</scope>
    <source>
        <strain>MGAS6180</strain>
    </source>
</reference>
<name>PEPT_STRPM</name>
<protein>
    <recommendedName>
        <fullName evidence="1">Peptidase T</fullName>
        <ecNumber evidence="1">3.4.11.4</ecNumber>
    </recommendedName>
    <alternativeName>
        <fullName evidence="1">Aminotripeptidase</fullName>
        <shortName evidence="1">Tripeptidase</shortName>
    </alternativeName>
    <alternativeName>
        <fullName evidence="1">Tripeptide aminopeptidase</fullName>
    </alternativeName>
</protein>
<proteinExistence type="inferred from homology"/>
<evidence type="ECO:0000255" key="1">
    <source>
        <dbReference type="HAMAP-Rule" id="MF_00550"/>
    </source>
</evidence>
<evidence type="ECO:0000305" key="2"/>
<comment type="function">
    <text evidence="1">Cleaves the N-terminal amino acid of tripeptides.</text>
</comment>
<comment type="catalytic activity">
    <reaction evidence="1">
        <text>Release of the N-terminal residue from a tripeptide.</text>
        <dbReference type="EC" id="3.4.11.4"/>
    </reaction>
</comment>
<comment type="cofactor">
    <cofactor evidence="1">
        <name>Zn(2+)</name>
        <dbReference type="ChEBI" id="CHEBI:29105"/>
    </cofactor>
    <text evidence="1">Binds 2 Zn(2+) ions per subunit.</text>
</comment>
<comment type="subcellular location">
    <subcellularLocation>
        <location evidence="1">Cytoplasm</location>
    </subcellularLocation>
</comment>
<comment type="similarity">
    <text evidence="1">Belongs to the peptidase M20B family.</text>
</comment>
<comment type="sequence caution" evidence="2">
    <conflict type="erroneous initiation">
        <sequence resource="EMBL-CDS" id="AAX71707"/>
    </conflict>
</comment>
<accession>Q48U99</accession>
<sequence length="407" mass="44999">MKYDNLLDRFIKYVKVNTRSDPDSETTPSTESQEAFALTILKPEMEAIGLQDVHYNPVNGYLIGTLPANNPTLTRKIGFIAHMDTADFNAENVNPQIIDNYQGGDITLGSSNYKLDPKAFPNLNNYIGQTLITTDGTTLLGADDKSGIAEIMTAIEFLTSQPQIEHCDIKVAFGPDEEIGVGADKFEVADFEVDFAYTMDGGPLGELQYETFSAAALEVTFLGRNVHPGTAKDQMINALELAIDFHEKLPAKERPEYTDGYQGFYHLTGLTGTVEEARASYIIRDFEEASFEARKVKVENIAQSMNAQLGTKRVLVELNDQYYNMKKVIEKDMTAIELAKEVMEELAIKPVIEPIRGGTDGSKISFMGIPTPNIFAGGENMHGRFEFVSLQTMERAVDVIIGLVCKA</sequence>
<organism>
    <name type="scientific">Streptococcus pyogenes serotype M28 (strain MGAS6180)</name>
    <dbReference type="NCBI Taxonomy" id="319701"/>
    <lineage>
        <taxon>Bacteria</taxon>
        <taxon>Bacillati</taxon>
        <taxon>Bacillota</taxon>
        <taxon>Bacilli</taxon>
        <taxon>Lactobacillales</taxon>
        <taxon>Streptococcaceae</taxon>
        <taxon>Streptococcus</taxon>
    </lineage>
</organism>
<keyword id="KW-0031">Aminopeptidase</keyword>
<keyword id="KW-0963">Cytoplasm</keyword>
<keyword id="KW-0378">Hydrolase</keyword>
<keyword id="KW-0479">Metal-binding</keyword>
<keyword id="KW-0482">Metalloprotease</keyword>
<keyword id="KW-0645">Protease</keyword>
<keyword id="KW-0862">Zinc</keyword>
<feature type="chain" id="PRO_0000185324" description="Peptidase T">
    <location>
        <begin position="1"/>
        <end position="407"/>
    </location>
</feature>
<feature type="active site" evidence="1">
    <location>
        <position position="84"/>
    </location>
</feature>
<feature type="active site" description="Proton acceptor" evidence="1">
    <location>
        <position position="177"/>
    </location>
</feature>
<feature type="binding site" evidence="1">
    <location>
        <position position="82"/>
    </location>
    <ligand>
        <name>Zn(2+)</name>
        <dbReference type="ChEBI" id="CHEBI:29105"/>
        <label>1</label>
    </ligand>
</feature>
<feature type="binding site" evidence="1">
    <location>
        <position position="143"/>
    </location>
    <ligand>
        <name>Zn(2+)</name>
        <dbReference type="ChEBI" id="CHEBI:29105"/>
        <label>1</label>
    </ligand>
</feature>
<feature type="binding site" evidence="1">
    <location>
        <position position="143"/>
    </location>
    <ligand>
        <name>Zn(2+)</name>
        <dbReference type="ChEBI" id="CHEBI:29105"/>
        <label>2</label>
    </ligand>
</feature>
<feature type="binding site" evidence="1">
    <location>
        <position position="178"/>
    </location>
    <ligand>
        <name>Zn(2+)</name>
        <dbReference type="ChEBI" id="CHEBI:29105"/>
        <label>2</label>
    </ligand>
</feature>
<feature type="binding site" evidence="1">
    <location>
        <position position="200"/>
    </location>
    <ligand>
        <name>Zn(2+)</name>
        <dbReference type="ChEBI" id="CHEBI:29105"/>
        <label>1</label>
    </ligand>
</feature>
<feature type="binding site" evidence="1">
    <location>
        <position position="382"/>
    </location>
    <ligand>
        <name>Zn(2+)</name>
        <dbReference type="ChEBI" id="CHEBI:29105"/>
        <label>2</label>
    </ligand>
</feature>
<gene>
    <name evidence="1" type="primary">pepT</name>
    <name type="ordered locus">M28_Spy0593</name>
</gene>